<keyword id="KW-1185">Reference proteome</keyword>
<keyword id="KW-0686">Riboflavin biosynthesis</keyword>
<keyword id="KW-0808">Transferase</keyword>
<evidence type="ECO:0000255" key="1">
    <source>
        <dbReference type="HAMAP-Rule" id="MF_00178"/>
    </source>
</evidence>
<gene>
    <name evidence="1" type="primary">ribH</name>
    <name type="ordered locus">FP2003</name>
</gene>
<proteinExistence type="inferred from homology"/>
<organism>
    <name type="scientific">Flavobacterium psychrophilum (strain ATCC 49511 / DSM 21280 / CIP 103535 / JIP02/86)</name>
    <dbReference type="NCBI Taxonomy" id="402612"/>
    <lineage>
        <taxon>Bacteria</taxon>
        <taxon>Pseudomonadati</taxon>
        <taxon>Bacteroidota</taxon>
        <taxon>Flavobacteriia</taxon>
        <taxon>Flavobacteriales</taxon>
        <taxon>Flavobacteriaceae</taxon>
        <taxon>Flavobacterium</taxon>
    </lineage>
</organism>
<sequence>MATANKNLSNYDKNTIPNAKNFRFGIVISEWNDHITEGLYSGVIEALTDCGALHKNIIRWNVPGSFELIYGAKKMIETQKPDVVITIGCVIKGETMHFEFVCEGVTQGIKDLNVLSDIPTIFCLLTDNTEQQSIDRSGGTHGNKGTEAAIAAIKMAYLREQANLGFHQSDKLLKTNQLQIEGLPLKIQE</sequence>
<accession>A6H143</accession>
<feature type="chain" id="PRO_1000040421" description="6,7-dimethyl-8-ribityllumazine synthase">
    <location>
        <begin position="1"/>
        <end position="189"/>
    </location>
</feature>
<feature type="active site" description="Proton donor" evidence="1">
    <location>
        <position position="97"/>
    </location>
</feature>
<feature type="binding site" evidence="1">
    <location>
        <position position="31"/>
    </location>
    <ligand>
        <name>5-amino-6-(D-ribitylamino)uracil</name>
        <dbReference type="ChEBI" id="CHEBI:15934"/>
    </ligand>
</feature>
<feature type="binding site" evidence="1">
    <location>
        <begin position="65"/>
        <end position="67"/>
    </location>
    <ligand>
        <name>5-amino-6-(D-ribitylamino)uracil</name>
        <dbReference type="ChEBI" id="CHEBI:15934"/>
    </ligand>
</feature>
<feature type="binding site" evidence="1">
    <location>
        <begin position="89"/>
        <end position="91"/>
    </location>
    <ligand>
        <name>5-amino-6-(D-ribitylamino)uracil</name>
        <dbReference type="ChEBI" id="CHEBI:15934"/>
    </ligand>
</feature>
<feature type="binding site" evidence="1">
    <location>
        <begin position="94"/>
        <end position="95"/>
    </location>
    <ligand>
        <name>(2S)-2-hydroxy-3-oxobutyl phosphate</name>
        <dbReference type="ChEBI" id="CHEBI:58830"/>
    </ligand>
</feature>
<feature type="binding site" evidence="1">
    <location>
        <position position="122"/>
    </location>
    <ligand>
        <name>5-amino-6-(D-ribitylamino)uracil</name>
        <dbReference type="ChEBI" id="CHEBI:15934"/>
    </ligand>
</feature>
<feature type="binding site" evidence="1">
    <location>
        <position position="136"/>
    </location>
    <ligand>
        <name>(2S)-2-hydroxy-3-oxobutyl phosphate</name>
        <dbReference type="ChEBI" id="CHEBI:58830"/>
    </ligand>
</feature>
<dbReference type="EC" id="2.5.1.78" evidence="1"/>
<dbReference type="EMBL" id="AM398681">
    <property type="protein sequence ID" value="CAL44067.1"/>
    <property type="molecule type" value="Genomic_DNA"/>
</dbReference>
<dbReference type="RefSeq" id="WP_011964104.1">
    <property type="nucleotide sequence ID" value="NC_009613.3"/>
</dbReference>
<dbReference type="RefSeq" id="YP_001296869.1">
    <property type="nucleotide sequence ID" value="NC_009613.3"/>
</dbReference>
<dbReference type="SMR" id="A6H143"/>
<dbReference type="STRING" id="402612.FP2003"/>
<dbReference type="EnsemblBacteria" id="CAL44067">
    <property type="protein sequence ID" value="CAL44067"/>
    <property type="gene ID" value="FP2003"/>
</dbReference>
<dbReference type="GeneID" id="66551814"/>
<dbReference type="KEGG" id="fps:FP2003"/>
<dbReference type="PATRIC" id="fig|402612.5.peg.2028"/>
<dbReference type="eggNOG" id="COG0054">
    <property type="taxonomic scope" value="Bacteria"/>
</dbReference>
<dbReference type="HOGENOM" id="CLU_089358_1_2_10"/>
<dbReference type="OrthoDB" id="9809709at2"/>
<dbReference type="UniPathway" id="UPA00275">
    <property type="reaction ID" value="UER00404"/>
</dbReference>
<dbReference type="Proteomes" id="UP000006394">
    <property type="component" value="Chromosome"/>
</dbReference>
<dbReference type="GO" id="GO:0005829">
    <property type="term" value="C:cytosol"/>
    <property type="evidence" value="ECO:0007669"/>
    <property type="project" value="TreeGrafter"/>
</dbReference>
<dbReference type="GO" id="GO:0009349">
    <property type="term" value="C:riboflavin synthase complex"/>
    <property type="evidence" value="ECO:0007669"/>
    <property type="project" value="InterPro"/>
</dbReference>
<dbReference type="GO" id="GO:0000906">
    <property type="term" value="F:6,7-dimethyl-8-ribityllumazine synthase activity"/>
    <property type="evidence" value="ECO:0007669"/>
    <property type="project" value="UniProtKB-UniRule"/>
</dbReference>
<dbReference type="GO" id="GO:0009231">
    <property type="term" value="P:riboflavin biosynthetic process"/>
    <property type="evidence" value="ECO:0007669"/>
    <property type="project" value="UniProtKB-UniRule"/>
</dbReference>
<dbReference type="CDD" id="cd09209">
    <property type="entry name" value="Lumazine_synthase-I"/>
    <property type="match status" value="1"/>
</dbReference>
<dbReference type="Gene3D" id="3.40.50.960">
    <property type="entry name" value="Lumazine/riboflavin synthase"/>
    <property type="match status" value="1"/>
</dbReference>
<dbReference type="HAMAP" id="MF_00178">
    <property type="entry name" value="Lumazine_synth"/>
    <property type="match status" value="1"/>
</dbReference>
<dbReference type="InterPro" id="IPR034964">
    <property type="entry name" value="LS"/>
</dbReference>
<dbReference type="InterPro" id="IPR002180">
    <property type="entry name" value="LS/RS"/>
</dbReference>
<dbReference type="InterPro" id="IPR036467">
    <property type="entry name" value="LS/RS_sf"/>
</dbReference>
<dbReference type="NCBIfam" id="TIGR00114">
    <property type="entry name" value="lumazine-synth"/>
    <property type="match status" value="1"/>
</dbReference>
<dbReference type="PANTHER" id="PTHR21058:SF0">
    <property type="entry name" value="6,7-DIMETHYL-8-RIBITYLLUMAZINE SYNTHASE"/>
    <property type="match status" value="1"/>
</dbReference>
<dbReference type="PANTHER" id="PTHR21058">
    <property type="entry name" value="6,7-DIMETHYL-8-RIBITYLLUMAZINE SYNTHASE DMRL SYNTHASE LUMAZINE SYNTHASE"/>
    <property type="match status" value="1"/>
</dbReference>
<dbReference type="Pfam" id="PF00885">
    <property type="entry name" value="DMRL_synthase"/>
    <property type="match status" value="1"/>
</dbReference>
<dbReference type="SUPFAM" id="SSF52121">
    <property type="entry name" value="Lumazine synthase"/>
    <property type="match status" value="1"/>
</dbReference>
<protein>
    <recommendedName>
        <fullName evidence="1">6,7-dimethyl-8-ribityllumazine synthase</fullName>
        <shortName evidence="1">DMRL synthase</shortName>
        <shortName evidence="1">LS</shortName>
        <shortName evidence="1">Lumazine synthase</shortName>
        <ecNumber evidence="1">2.5.1.78</ecNumber>
    </recommendedName>
</protein>
<comment type="function">
    <text evidence="1">Catalyzes the formation of 6,7-dimethyl-8-ribityllumazine by condensation of 5-amino-6-(D-ribitylamino)uracil with 3,4-dihydroxy-2-butanone 4-phosphate. This is the penultimate step in the biosynthesis of riboflavin.</text>
</comment>
<comment type="catalytic activity">
    <reaction evidence="1">
        <text>(2S)-2-hydroxy-3-oxobutyl phosphate + 5-amino-6-(D-ribitylamino)uracil = 6,7-dimethyl-8-(1-D-ribityl)lumazine + phosphate + 2 H2O + H(+)</text>
        <dbReference type="Rhea" id="RHEA:26152"/>
        <dbReference type="ChEBI" id="CHEBI:15377"/>
        <dbReference type="ChEBI" id="CHEBI:15378"/>
        <dbReference type="ChEBI" id="CHEBI:15934"/>
        <dbReference type="ChEBI" id="CHEBI:43474"/>
        <dbReference type="ChEBI" id="CHEBI:58201"/>
        <dbReference type="ChEBI" id="CHEBI:58830"/>
        <dbReference type="EC" id="2.5.1.78"/>
    </reaction>
</comment>
<comment type="pathway">
    <text evidence="1">Cofactor biosynthesis; riboflavin biosynthesis; riboflavin from 2-hydroxy-3-oxobutyl phosphate and 5-amino-6-(D-ribitylamino)uracil: step 1/2.</text>
</comment>
<comment type="similarity">
    <text evidence="1">Belongs to the DMRL synthase family.</text>
</comment>
<name>RISB_FLAPJ</name>
<reference key="1">
    <citation type="journal article" date="2007" name="Nat. Biotechnol.">
        <title>Complete genome sequence of the fish pathogen Flavobacterium psychrophilum.</title>
        <authorList>
            <person name="Duchaud E."/>
            <person name="Boussaha M."/>
            <person name="Loux V."/>
            <person name="Bernardet J.-F."/>
            <person name="Michel C."/>
            <person name="Kerouault B."/>
            <person name="Mondot S."/>
            <person name="Nicolas P."/>
            <person name="Bossy R."/>
            <person name="Caron C."/>
            <person name="Bessieres P."/>
            <person name="Gibrat J.-F."/>
            <person name="Claverol S."/>
            <person name="Dumetz F."/>
            <person name="Le Henaff M."/>
            <person name="Benmansour A."/>
        </authorList>
    </citation>
    <scope>NUCLEOTIDE SEQUENCE [LARGE SCALE GENOMIC DNA]</scope>
    <source>
        <strain>ATCC 49511 / DSM 21280 / CIP 103535 / JIP02/86</strain>
    </source>
</reference>